<evidence type="ECO:0000255" key="1">
    <source>
        <dbReference type="HAMAP-Rule" id="MF_00625"/>
    </source>
</evidence>
<reference key="1">
    <citation type="journal article" date="2002" name="Environ. Microbiol.">
        <title>Complete genome sequence and comparative analysis of the metabolically versatile Pseudomonas putida KT2440.</title>
        <authorList>
            <person name="Nelson K.E."/>
            <person name="Weinel C."/>
            <person name="Paulsen I.T."/>
            <person name="Dodson R.J."/>
            <person name="Hilbert H."/>
            <person name="Martins dos Santos V.A.P."/>
            <person name="Fouts D.E."/>
            <person name="Gill S.R."/>
            <person name="Pop M."/>
            <person name="Holmes M."/>
            <person name="Brinkac L.M."/>
            <person name="Beanan M.J."/>
            <person name="DeBoy R.T."/>
            <person name="Daugherty S.C."/>
            <person name="Kolonay J.F."/>
            <person name="Madupu R."/>
            <person name="Nelson W.C."/>
            <person name="White O."/>
            <person name="Peterson J.D."/>
            <person name="Khouri H.M."/>
            <person name="Hance I."/>
            <person name="Chris Lee P."/>
            <person name="Holtzapple E.K."/>
            <person name="Scanlan D."/>
            <person name="Tran K."/>
            <person name="Moazzez A."/>
            <person name="Utterback T.R."/>
            <person name="Rizzo M."/>
            <person name="Lee K."/>
            <person name="Kosack D."/>
            <person name="Moestl D."/>
            <person name="Wedler H."/>
            <person name="Lauber J."/>
            <person name="Stjepandic D."/>
            <person name="Hoheisel J."/>
            <person name="Straetz M."/>
            <person name="Heim S."/>
            <person name="Kiewitz C."/>
            <person name="Eisen J.A."/>
            <person name="Timmis K.N."/>
            <person name="Duesterhoeft A."/>
            <person name="Tuemmler B."/>
            <person name="Fraser C.M."/>
        </authorList>
    </citation>
    <scope>NUCLEOTIDE SEQUENCE [LARGE SCALE GENOMIC DNA]</scope>
    <source>
        <strain>ATCC 47054 / DSM 6125 / CFBP 8728 / NCIMB 11950 / KT2440</strain>
    </source>
</reference>
<name>SELD_PSEPK</name>
<sequence length="344" mass="36246">MSEPIRLTQYSHGAGCGCKISPKVLDVILAESGTQALDPKLWVGNASRDDAAVYALDDERGVVSTTDFFMPIVDDPYDFGRIAATNAISDIYAMGGDPLMAIAILGWPVNVLPPEVAREVIRGGRAVCAEAGIPLAGGHSIDAPEPIFGLAVTGVVSKRHLKRNDTASAGCQLYLTKPLGIGILTTAEKKAKLRVQDQGLARDWMCTLNTPGSRFGKLDGVKAMTDVTGFGLLGHLVELAEGSGLTAHLNYAAVPRLPSVDHYLAEGCIPGGTLRNYDSYGHKISALSDDQKHLLCDPQTSGGLLVAVAPEGEAEFLAVAAELGLKLSPIGKLVERQSHAVEVI</sequence>
<dbReference type="EC" id="2.7.9.3" evidence="1"/>
<dbReference type="EMBL" id="AE015451">
    <property type="protein sequence ID" value="AAN66448.1"/>
    <property type="molecule type" value="Genomic_DNA"/>
</dbReference>
<dbReference type="RefSeq" id="NP_742984.1">
    <property type="nucleotide sequence ID" value="NC_002947.4"/>
</dbReference>
<dbReference type="RefSeq" id="WP_010952053.1">
    <property type="nucleotide sequence ID" value="NZ_CP169744.1"/>
</dbReference>
<dbReference type="SMR" id="P59392"/>
<dbReference type="STRING" id="160488.PP_0823"/>
<dbReference type="PaxDb" id="160488-PP_0823"/>
<dbReference type="GeneID" id="83678175"/>
<dbReference type="KEGG" id="ppu:PP_0823"/>
<dbReference type="PATRIC" id="fig|160488.4.peg.880"/>
<dbReference type="eggNOG" id="COG0709">
    <property type="taxonomic scope" value="Bacteria"/>
</dbReference>
<dbReference type="HOGENOM" id="CLU_032859_0_1_6"/>
<dbReference type="OrthoDB" id="9767928at2"/>
<dbReference type="PhylomeDB" id="P59392"/>
<dbReference type="BioCyc" id="PPUT160488:G1G01-897-MONOMER"/>
<dbReference type="Proteomes" id="UP000000556">
    <property type="component" value="Chromosome"/>
</dbReference>
<dbReference type="GO" id="GO:0005737">
    <property type="term" value="C:cytoplasm"/>
    <property type="evidence" value="ECO:0007669"/>
    <property type="project" value="TreeGrafter"/>
</dbReference>
<dbReference type="GO" id="GO:0005524">
    <property type="term" value="F:ATP binding"/>
    <property type="evidence" value="ECO:0007669"/>
    <property type="project" value="UniProtKB-UniRule"/>
</dbReference>
<dbReference type="GO" id="GO:0000287">
    <property type="term" value="F:magnesium ion binding"/>
    <property type="evidence" value="ECO:0007669"/>
    <property type="project" value="UniProtKB-UniRule"/>
</dbReference>
<dbReference type="GO" id="GO:0004756">
    <property type="term" value="F:selenide, water dikinase activity"/>
    <property type="evidence" value="ECO:0007669"/>
    <property type="project" value="UniProtKB-UniRule"/>
</dbReference>
<dbReference type="GO" id="GO:0016260">
    <property type="term" value="P:selenocysteine biosynthetic process"/>
    <property type="evidence" value="ECO:0007669"/>
    <property type="project" value="InterPro"/>
</dbReference>
<dbReference type="CDD" id="cd02195">
    <property type="entry name" value="SelD"/>
    <property type="match status" value="1"/>
</dbReference>
<dbReference type="FunFam" id="3.30.1330.10:FF:000003">
    <property type="entry name" value="Selenide, water dikinase"/>
    <property type="match status" value="1"/>
</dbReference>
<dbReference type="FunFam" id="3.90.650.10:FF:000004">
    <property type="entry name" value="Selenide, water dikinase"/>
    <property type="match status" value="1"/>
</dbReference>
<dbReference type="Gene3D" id="3.90.650.10">
    <property type="entry name" value="PurM-like C-terminal domain"/>
    <property type="match status" value="1"/>
</dbReference>
<dbReference type="Gene3D" id="3.30.1330.10">
    <property type="entry name" value="PurM-like, N-terminal domain"/>
    <property type="match status" value="1"/>
</dbReference>
<dbReference type="HAMAP" id="MF_00625">
    <property type="entry name" value="SelD"/>
    <property type="match status" value="1"/>
</dbReference>
<dbReference type="InterPro" id="IPR010918">
    <property type="entry name" value="PurM-like_C_dom"/>
</dbReference>
<dbReference type="InterPro" id="IPR036676">
    <property type="entry name" value="PurM-like_C_sf"/>
</dbReference>
<dbReference type="InterPro" id="IPR016188">
    <property type="entry name" value="PurM-like_N"/>
</dbReference>
<dbReference type="InterPro" id="IPR036921">
    <property type="entry name" value="PurM-like_N_sf"/>
</dbReference>
<dbReference type="InterPro" id="IPR023061">
    <property type="entry name" value="SelD_I"/>
</dbReference>
<dbReference type="InterPro" id="IPR004536">
    <property type="entry name" value="SPS/SelD"/>
</dbReference>
<dbReference type="NCBIfam" id="NF002098">
    <property type="entry name" value="PRK00943.1"/>
    <property type="match status" value="1"/>
</dbReference>
<dbReference type="NCBIfam" id="TIGR00476">
    <property type="entry name" value="selD"/>
    <property type="match status" value="1"/>
</dbReference>
<dbReference type="PANTHER" id="PTHR10256:SF0">
    <property type="entry name" value="INACTIVE SELENIDE, WATER DIKINASE-LIKE PROTEIN-RELATED"/>
    <property type="match status" value="1"/>
</dbReference>
<dbReference type="PANTHER" id="PTHR10256">
    <property type="entry name" value="SELENIDE, WATER DIKINASE"/>
    <property type="match status" value="1"/>
</dbReference>
<dbReference type="Pfam" id="PF00586">
    <property type="entry name" value="AIRS"/>
    <property type="match status" value="1"/>
</dbReference>
<dbReference type="Pfam" id="PF02769">
    <property type="entry name" value="AIRS_C"/>
    <property type="match status" value="1"/>
</dbReference>
<dbReference type="PIRSF" id="PIRSF036407">
    <property type="entry name" value="Selenphspht_syn"/>
    <property type="match status" value="1"/>
</dbReference>
<dbReference type="SUPFAM" id="SSF56042">
    <property type="entry name" value="PurM C-terminal domain-like"/>
    <property type="match status" value="1"/>
</dbReference>
<dbReference type="SUPFAM" id="SSF55326">
    <property type="entry name" value="PurM N-terminal domain-like"/>
    <property type="match status" value="1"/>
</dbReference>
<keyword id="KW-0067">ATP-binding</keyword>
<keyword id="KW-0418">Kinase</keyword>
<keyword id="KW-0460">Magnesium</keyword>
<keyword id="KW-0479">Metal-binding</keyword>
<keyword id="KW-0547">Nucleotide-binding</keyword>
<keyword id="KW-1185">Reference proteome</keyword>
<keyword id="KW-0711">Selenium</keyword>
<keyword id="KW-0808">Transferase</keyword>
<organism>
    <name type="scientific">Pseudomonas putida (strain ATCC 47054 / DSM 6125 / CFBP 8728 / NCIMB 11950 / KT2440)</name>
    <dbReference type="NCBI Taxonomy" id="160488"/>
    <lineage>
        <taxon>Bacteria</taxon>
        <taxon>Pseudomonadati</taxon>
        <taxon>Pseudomonadota</taxon>
        <taxon>Gammaproteobacteria</taxon>
        <taxon>Pseudomonadales</taxon>
        <taxon>Pseudomonadaceae</taxon>
        <taxon>Pseudomonas</taxon>
    </lineage>
</organism>
<proteinExistence type="inferred from homology"/>
<feature type="chain" id="PRO_0000127634" description="Selenide, water dikinase">
    <location>
        <begin position="1"/>
        <end position="344"/>
    </location>
</feature>
<feature type="active site" evidence="1">
    <location>
        <position position="16"/>
    </location>
</feature>
<feature type="binding site" description="in other chain" evidence="1">
    <location>
        <position position="19"/>
    </location>
    <ligand>
        <name>ATP</name>
        <dbReference type="ChEBI" id="CHEBI:30616"/>
        <note>ligand shared between dimeric partners</note>
    </ligand>
</feature>
<feature type="binding site" description="in other chain" evidence="1">
    <location>
        <begin position="47"/>
        <end position="49"/>
    </location>
    <ligand>
        <name>ATP</name>
        <dbReference type="ChEBI" id="CHEBI:30616"/>
        <note>ligand shared between dimeric partners</note>
    </ligand>
</feature>
<feature type="binding site" evidence="1">
    <location>
        <position position="50"/>
    </location>
    <ligand>
        <name>Mg(2+)</name>
        <dbReference type="ChEBI" id="CHEBI:18420"/>
    </ligand>
</feature>
<feature type="binding site" description="in other chain" evidence="1">
    <location>
        <position position="67"/>
    </location>
    <ligand>
        <name>ATP</name>
        <dbReference type="ChEBI" id="CHEBI:30616"/>
        <note>ligand shared between dimeric partners</note>
    </ligand>
</feature>
<feature type="binding site" description="in other chain" evidence="1">
    <location>
        <position position="90"/>
    </location>
    <ligand>
        <name>ATP</name>
        <dbReference type="ChEBI" id="CHEBI:30616"/>
        <note>ligand shared between dimeric partners</note>
    </ligand>
</feature>
<feature type="binding site" evidence="1">
    <location>
        <position position="90"/>
    </location>
    <ligand>
        <name>Mg(2+)</name>
        <dbReference type="ChEBI" id="CHEBI:18420"/>
    </ligand>
</feature>
<feature type="binding site" evidence="1">
    <location>
        <begin position="138"/>
        <end position="140"/>
    </location>
    <ligand>
        <name>ATP</name>
        <dbReference type="ChEBI" id="CHEBI:30616"/>
        <note>ligand shared between dimeric partners</note>
    </ligand>
</feature>
<feature type="binding site" evidence="1">
    <location>
        <position position="226"/>
    </location>
    <ligand>
        <name>Mg(2+)</name>
        <dbReference type="ChEBI" id="CHEBI:18420"/>
    </ligand>
</feature>
<feature type="site" description="Important for catalytic activity" evidence="1">
    <location>
        <position position="19"/>
    </location>
</feature>
<comment type="function">
    <text evidence="1">Synthesizes selenophosphate from selenide and ATP.</text>
</comment>
<comment type="catalytic activity">
    <reaction evidence="1">
        <text>hydrogenselenide + ATP + H2O = selenophosphate + AMP + phosphate + 2 H(+)</text>
        <dbReference type="Rhea" id="RHEA:18737"/>
        <dbReference type="ChEBI" id="CHEBI:15377"/>
        <dbReference type="ChEBI" id="CHEBI:15378"/>
        <dbReference type="ChEBI" id="CHEBI:16144"/>
        <dbReference type="ChEBI" id="CHEBI:29317"/>
        <dbReference type="ChEBI" id="CHEBI:30616"/>
        <dbReference type="ChEBI" id="CHEBI:43474"/>
        <dbReference type="ChEBI" id="CHEBI:456215"/>
        <dbReference type="EC" id="2.7.9.3"/>
    </reaction>
</comment>
<comment type="cofactor">
    <cofactor evidence="1">
        <name>Mg(2+)</name>
        <dbReference type="ChEBI" id="CHEBI:18420"/>
    </cofactor>
    <text evidence="1">Binds 1 Mg(2+) ion per monomer.</text>
</comment>
<comment type="subunit">
    <text evidence="1">Homodimer.</text>
</comment>
<comment type="similarity">
    <text evidence="1">Belongs to the selenophosphate synthase 1 family. Class I subfamily.</text>
</comment>
<gene>
    <name evidence="1" type="primary">selD</name>
    <name type="ordered locus">PP_0823</name>
</gene>
<accession>P59392</accession>
<protein>
    <recommendedName>
        <fullName evidence="1">Selenide, water dikinase</fullName>
        <ecNumber evidence="1">2.7.9.3</ecNumber>
    </recommendedName>
    <alternativeName>
        <fullName evidence="1">Selenium donor protein</fullName>
    </alternativeName>
    <alternativeName>
        <fullName evidence="1">Selenophosphate synthase</fullName>
    </alternativeName>
</protein>